<accession>Q63WM2</accession>
<name>OTC_BURPS</name>
<dbReference type="EC" id="2.1.3.3" evidence="2"/>
<dbReference type="EMBL" id="BX571965">
    <property type="protein sequence ID" value="CAH34861.1"/>
    <property type="molecule type" value="Genomic_DNA"/>
</dbReference>
<dbReference type="RefSeq" id="WP_004190177.1">
    <property type="nucleotide sequence ID" value="NZ_CP009538.1"/>
</dbReference>
<dbReference type="RefSeq" id="YP_107494.1">
    <property type="nucleotide sequence ID" value="NC_006350.1"/>
</dbReference>
<dbReference type="SMR" id="Q63WM2"/>
<dbReference type="STRING" id="272560.BPSL0869"/>
<dbReference type="GeneID" id="93059376"/>
<dbReference type="KEGG" id="bps:BPSL0869"/>
<dbReference type="PATRIC" id="fig|272560.51.peg.727"/>
<dbReference type="eggNOG" id="COG0078">
    <property type="taxonomic scope" value="Bacteria"/>
</dbReference>
<dbReference type="UniPathway" id="UPA00068">
    <property type="reaction ID" value="UER00112"/>
</dbReference>
<dbReference type="Proteomes" id="UP000000605">
    <property type="component" value="Chromosome 1"/>
</dbReference>
<dbReference type="GO" id="GO:0005737">
    <property type="term" value="C:cytoplasm"/>
    <property type="evidence" value="ECO:0007669"/>
    <property type="project" value="UniProtKB-SubCell"/>
</dbReference>
<dbReference type="GO" id="GO:0016597">
    <property type="term" value="F:amino acid binding"/>
    <property type="evidence" value="ECO:0007669"/>
    <property type="project" value="InterPro"/>
</dbReference>
<dbReference type="GO" id="GO:0004585">
    <property type="term" value="F:ornithine carbamoyltransferase activity"/>
    <property type="evidence" value="ECO:0007669"/>
    <property type="project" value="UniProtKB-UniRule"/>
</dbReference>
<dbReference type="GO" id="GO:0042450">
    <property type="term" value="P:arginine biosynthetic process via ornithine"/>
    <property type="evidence" value="ECO:0007669"/>
    <property type="project" value="TreeGrafter"/>
</dbReference>
<dbReference type="GO" id="GO:0019240">
    <property type="term" value="P:citrulline biosynthetic process"/>
    <property type="evidence" value="ECO:0007669"/>
    <property type="project" value="TreeGrafter"/>
</dbReference>
<dbReference type="GO" id="GO:0006526">
    <property type="term" value="P:L-arginine biosynthetic process"/>
    <property type="evidence" value="ECO:0007669"/>
    <property type="project" value="UniProtKB-UniRule"/>
</dbReference>
<dbReference type="FunFam" id="3.40.50.1370:FF:000008">
    <property type="entry name" value="Ornithine carbamoyltransferase"/>
    <property type="match status" value="1"/>
</dbReference>
<dbReference type="Gene3D" id="3.40.50.1370">
    <property type="entry name" value="Aspartate/ornithine carbamoyltransferase"/>
    <property type="match status" value="2"/>
</dbReference>
<dbReference type="HAMAP" id="MF_01109">
    <property type="entry name" value="OTCase"/>
    <property type="match status" value="1"/>
</dbReference>
<dbReference type="InterPro" id="IPR006132">
    <property type="entry name" value="Asp/Orn_carbamoyltranf_P-bd"/>
</dbReference>
<dbReference type="InterPro" id="IPR006130">
    <property type="entry name" value="Asp/Orn_carbamoylTrfase"/>
</dbReference>
<dbReference type="InterPro" id="IPR036901">
    <property type="entry name" value="Asp/Orn_carbamoylTrfase_sf"/>
</dbReference>
<dbReference type="InterPro" id="IPR006131">
    <property type="entry name" value="Asp_carbamoyltransf_Asp/Orn-bd"/>
</dbReference>
<dbReference type="InterPro" id="IPR002292">
    <property type="entry name" value="Orn/put_carbamltrans"/>
</dbReference>
<dbReference type="InterPro" id="IPR024904">
    <property type="entry name" value="OTCase_ArgI"/>
</dbReference>
<dbReference type="NCBIfam" id="TIGR00658">
    <property type="entry name" value="orni_carb_tr"/>
    <property type="match status" value="1"/>
</dbReference>
<dbReference type="NCBIfam" id="NF001986">
    <property type="entry name" value="PRK00779.1"/>
    <property type="match status" value="1"/>
</dbReference>
<dbReference type="PANTHER" id="PTHR45753">
    <property type="entry name" value="ORNITHINE CARBAMOYLTRANSFERASE, MITOCHONDRIAL"/>
    <property type="match status" value="1"/>
</dbReference>
<dbReference type="PANTHER" id="PTHR45753:SF3">
    <property type="entry name" value="ORNITHINE TRANSCARBAMYLASE, MITOCHONDRIAL"/>
    <property type="match status" value="1"/>
</dbReference>
<dbReference type="Pfam" id="PF00185">
    <property type="entry name" value="OTCace"/>
    <property type="match status" value="1"/>
</dbReference>
<dbReference type="Pfam" id="PF02729">
    <property type="entry name" value="OTCace_N"/>
    <property type="match status" value="1"/>
</dbReference>
<dbReference type="PRINTS" id="PR00100">
    <property type="entry name" value="AOTCASE"/>
</dbReference>
<dbReference type="PRINTS" id="PR00102">
    <property type="entry name" value="OTCASE"/>
</dbReference>
<dbReference type="SUPFAM" id="SSF53671">
    <property type="entry name" value="Aspartate/ornithine carbamoyltransferase"/>
    <property type="match status" value="1"/>
</dbReference>
<dbReference type="PROSITE" id="PS00097">
    <property type="entry name" value="CARBAMOYLTRANSFERASE"/>
    <property type="match status" value="1"/>
</dbReference>
<organism>
    <name type="scientific">Burkholderia pseudomallei (strain K96243)</name>
    <dbReference type="NCBI Taxonomy" id="272560"/>
    <lineage>
        <taxon>Bacteria</taxon>
        <taxon>Pseudomonadati</taxon>
        <taxon>Pseudomonadota</taxon>
        <taxon>Betaproteobacteria</taxon>
        <taxon>Burkholderiales</taxon>
        <taxon>Burkholderiaceae</taxon>
        <taxon>Burkholderia</taxon>
        <taxon>pseudomallei group</taxon>
    </lineage>
</organism>
<feature type="chain" id="PRO_0000112902" description="Ornithine carbamoyltransferase">
    <location>
        <begin position="1"/>
        <end position="309"/>
    </location>
</feature>
<feature type="binding site" evidence="2">
    <location>
        <begin position="56"/>
        <end position="59"/>
    </location>
    <ligand>
        <name>carbamoyl phosphate</name>
        <dbReference type="ChEBI" id="CHEBI:58228"/>
    </ligand>
</feature>
<feature type="binding site" evidence="2">
    <location>
        <position position="83"/>
    </location>
    <ligand>
        <name>carbamoyl phosphate</name>
        <dbReference type="ChEBI" id="CHEBI:58228"/>
    </ligand>
</feature>
<feature type="binding site" evidence="2">
    <location>
        <position position="107"/>
    </location>
    <ligand>
        <name>carbamoyl phosphate</name>
        <dbReference type="ChEBI" id="CHEBI:58228"/>
    </ligand>
</feature>
<feature type="binding site" evidence="2">
    <location>
        <begin position="134"/>
        <end position="137"/>
    </location>
    <ligand>
        <name>carbamoyl phosphate</name>
        <dbReference type="ChEBI" id="CHEBI:58228"/>
    </ligand>
</feature>
<feature type="binding site" evidence="2">
    <location>
        <position position="165"/>
    </location>
    <ligand>
        <name>L-ornithine</name>
        <dbReference type="ChEBI" id="CHEBI:46911"/>
    </ligand>
</feature>
<feature type="binding site" evidence="2">
    <location>
        <position position="223"/>
    </location>
    <ligand>
        <name>L-ornithine</name>
        <dbReference type="ChEBI" id="CHEBI:46911"/>
    </ligand>
</feature>
<feature type="binding site" evidence="2">
    <location>
        <begin position="227"/>
        <end position="228"/>
    </location>
    <ligand>
        <name>L-ornithine</name>
        <dbReference type="ChEBI" id="CHEBI:46911"/>
    </ligand>
</feature>
<feature type="binding site" evidence="2">
    <location>
        <begin position="263"/>
        <end position="264"/>
    </location>
    <ligand>
        <name>carbamoyl phosphate</name>
        <dbReference type="ChEBI" id="CHEBI:58228"/>
    </ligand>
</feature>
<feature type="binding site" evidence="2">
    <location>
        <position position="291"/>
    </location>
    <ligand>
        <name>carbamoyl phosphate</name>
        <dbReference type="ChEBI" id="CHEBI:58228"/>
    </ligand>
</feature>
<sequence>MTAKTIRHYLQFKDFSLEDYEYVLERTGILKRKFKNYETYHPLHDRTLAMIFEKSSTRTRLSFEAGIFQLGGHAVFMSTRDTQLGRGEPVEDSAQVISRMVDIIMIRTFEQDIIQRFAENSRVPVINGLTNEYHPCQVLADIFTYYEHRGPIRGKTVAWVGDANNMLYTWIQAARILGFKLRLSTPPGYALDTKLVDAESAPFYQVFDDPNEACKGADLVTTDVWTSMGFEAENEARKQAFADWCVDEEMMSHAHPDALFMHCLPAHRGEEVTAGVIDGPQSVVWDEAENRLHVQKALMEFLLLGRLNH</sequence>
<proteinExistence type="inferred from homology"/>
<keyword id="KW-0028">Amino-acid biosynthesis</keyword>
<keyword id="KW-0055">Arginine biosynthesis</keyword>
<keyword id="KW-0963">Cytoplasm</keyword>
<keyword id="KW-1185">Reference proteome</keyword>
<keyword id="KW-0808">Transferase</keyword>
<reference key="1">
    <citation type="journal article" date="2004" name="Proc. Natl. Acad. Sci. U.S.A.">
        <title>Genomic plasticity of the causative agent of melioidosis, Burkholderia pseudomallei.</title>
        <authorList>
            <person name="Holden M.T.G."/>
            <person name="Titball R.W."/>
            <person name="Peacock S.J."/>
            <person name="Cerdeno-Tarraga A.-M."/>
            <person name="Atkins T."/>
            <person name="Crossman L.C."/>
            <person name="Pitt T."/>
            <person name="Churcher C."/>
            <person name="Mungall K.L."/>
            <person name="Bentley S.D."/>
            <person name="Sebaihia M."/>
            <person name="Thomson N.R."/>
            <person name="Bason N."/>
            <person name="Beacham I.R."/>
            <person name="Brooks K."/>
            <person name="Brown K.A."/>
            <person name="Brown N.F."/>
            <person name="Challis G.L."/>
            <person name="Cherevach I."/>
            <person name="Chillingworth T."/>
            <person name="Cronin A."/>
            <person name="Crossett B."/>
            <person name="Davis P."/>
            <person name="DeShazer D."/>
            <person name="Feltwell T."/>
            <person name="Fraser A."/>
            <person name="Hance Z."/>
            <person name="Hauser H."/>
            <person name="Holroyd S."/>
            <person name="Jagels K."/>
            <person name="Keith K.E."/>
            <person name="Maddison M."/>
            <person name="Moule S."/>
            <person name="Price C."/>
            <person name="Quail M.A."/>
            <person name="Rabbinowitsch E."/>
            <person name="Rutherford K."/>
            <person name="Sanders M."/>
            <person name="Simmonds M."/>
            <person name="Songsivilai S."/>
            <person name="Stevens K."/>
            <person name="Tumapa S."/>
            <person name="Vesaratchavest M."/>
            <person name="Whitehead S."/>
            <person name="Yeats C."/>
            <person name="Barrell B.G."/>
            <person name="Oyston P.C.F."/>
            <person name="Parkhill J."/>
        </authorList>
    </citation>
    <scope>NUCLEOTIDE SEQUENCE [LARGE SCALE GENOMIC DNA]</scope>
    <source>
        <strain>K96243</strain>
    </source>
</reference>
<protein>
    <recommendedName>
        <fullName evidence="2">Ornithine carbamoyltransferase</fullName>
        <shortName evidence="2">OTCase</shortName>
        <ecNumber evidence="2">2.1.3.3</ecNumber>
    </recommendedName>
</protein>
<comment type="function">
    <text evidence="1">Reversibly catalyzes the transfer of the carbamoyl group from carbamoyl phosphate (CP) to the N(epsilon) atom of ornithine (ORN) to produce L-citrulline.</text>
</comment>
<comment type="catalytic activity">
    <reaction evidence="2">
        <text>carbamoyl phosphate + L-ornithine = L-citrulline + phosphate + H(+)</text>
        <dbReference type="Rhea" id="RHEA:19513"/>
        <dbReference type="ChEBI" id="CHEBI:15378"/>
        <dbReference type="ChEBI" id="CHEBI:43474"/>
        <dbReference type="ChEBI" id="CHEBI:46911"/>
        <dbReference type="ChEBI" id="CHEBI:57743"/>
        <dbReference type="ChEBI" id="CHEBI:58228"/>
        <dbReference type="EC" id="2.1.3.3"/>
    </reaction>
</comment>
<comment type="pathway">
    <text evidence="2">Amino-acid biosynthesis; L-arginine biosynthesis; L-arginine from L-ornithine and carbamoyl phosphate: step 1/3.</text>
</comment>
<comment type="subcellular location">
    <subcellularLocation>
        <location evidence="2">Cytoplasm</location>
    </subcellularLocation>
</comment>
<comment type="similarity">
    <text evidence="2">Belongs to the aspartate/ornithine carbamoyltransferase superfamily. OTCase family.</text>
</comment>
<evidence type="ECO:0000250" key="1"/>
<evidence type="ECO:0000255" key="2">
    <source>
        <dbReference type="HAMAP-Rule" id="MF_01109"/>
    </source>
</evidence>
<gene>
    <name evidence="2" type="primary">argF</name>
    <name type="ordered locus">BPSL0869</name>
</gene>